<keyword id="KW-0050">Antiport</keyword>
<keyword id="KW-1003">Cell membrane</keyword>
<keyword id="KW-0472">Membrane</keyword>
<keyword id="KW-1185">Reference proteome</keyword>
<keyword id="KW-0812">Transmembrane</keyword>
<keyword id="KW-1133">Transmembrane helix</keyword>
<keyword id="KW-0813">Transport</keyword>
<dbReference type="EMBL" id="EF121852">
    <property type="protein sequence ID" value="ABP96920.1"/>
    <property type="molecule type" value="mRNA"/>
</dbReference>
<dbReference type="RefSeq" id="NP_001103290.2">
    <property type="nucleotide sequence ID" value="NM_001109820.2"/>
</dbReference>
<dbReference type="SMR" id="A7KAU3"/>
<dbReference type="STRING" id="9986.ENSOCUP00000010244"/>
<dbReference type="PaxDb" id="9986-ENSOCUP00000010244"/>
<dbReference type="GeneID" id="100125996"/>
<dbReference type="KEGG" id="ocu:100125996"/>
<dbReference type="CTD" id="146802"/>
<dbReference type="eggNOG" id="KOG1347">
    <property type="taxonomic scope" value="Eukaryota"/>
</dbReference>
<dbReference type="InParanoid" id="A7KAU3"/>
<dbReference type="OrthoDB" id="2126698at2759"/>
<dbReference type="Proteomes" id="UP000001811">
    <property type="component" value="Unplaced"/>
</dbReference>
<dbReference type="GO" id="GO:0016324">
    <property type="term" value="C:apical plasma membrane"/>
    <property type="evidence" value="ECO:0007669"/>
    <property type="project" value="UniProtKB-SubCell"/>
</dbReference>
<dbReference type="GO" id="GO:0015297">
    <property type="term" value="F:antiporter activity"/>
    <property type="evidence" value="ECO:0000314"/>
    <property type="project" value="UniProtKB"/>
</dbReference>
<dbReference type="GO" id="GO:0015101">
    <property type="term" value="F:organic cation transmembrane transporter activity"/>
    <property type="evidence" value="ECO:0000314"/>
    <property type="project" value="UniProtKB"/>
</dbReference>
<dbReference type="GO" id="GO:0042910">
    <property type="term" value="F:xenobiotic transmembrane transporter activity"/>
    <property type="evidence" value="ECO:0000314"/>
    <property type="project" value="UniProtKB"/>
</dbReference>
<dbReference type="GO" id="GO:0015695">
    <property type="term" value="P:organic cation transport"/>
    <property type="evidence" value="ECO:0000314"/>
    <property type="project" value="UniProtKB"/>
</dbReference>
<dbReference type="GO" id="GO:1990961">
    <property type="term" value="P:xenobiotic detoxification by transmembrane export across the plasma membrane"/>
    <property type="evidence" value="ECO:0007669"/>
    <property type="project" value="InterPro"/>
</dbReference>
<dbReference type="CDD" id="cd13132">
    <property type="entry name" value="MATE_eukaryotic"/>
    <property type="match status" value="1"/>
</dbReference>
<dbReference type="InterPro" id="IPR045069">
    <property type="entry name" value="MATE_euk"/>
</dbReference>
<dbReference type="InterPro" id="IPR002528">
    <property type="entry name" value="MATE_fam"/>
</dbReference>
<dbReference type="NCBIfam" id="TIGR00797">
    <property type="entry name" value="matE"/>
    <property type="match status" value="1"/>
</dbReference>
<dbReference type="PANTHER" id="PTHR11206">
    <property type="entry name" value="MULTIDRUG RESISTANCE PROTEIN"/>
    <property type="match status" value="1"/>
</dbReference>
<dbReference type="Pfam" id="PF01554">
    <property type="entry name" value="MatE"/>
    <property type="match status" value="2"/>
</dbReference>
<gene>
    <name type="primary">SLC47A2</name>
    <name type="synonym">MATE2</name>
</gene>
<comment type="function">
    <text evidence="1 3">Multidrug efflux pump that functions as a H(+)/organic cation antiporter (PubMed:17442726). Mediates the efflux of cationic compounds, such as the model cations, tetraethylammonium (TEA) and 1-methyl-4-phenylpyridinium (MPP+), the platinum-based drug oxaliplatin or weak bases that are positively charged at physiological pH, cimetidine or the antidiabetic drug metformin. Mediates the efflux of the endogenous compounds creatinine, thiamine and estrone-3-sulfate. Plays a physiological role in the excretion of drugs, toxins and endogenous metabolites through the kidney (By similarity).</text>
</comment>
<comment type="catalytic activity">
    <reaction evidence="1">
        <text>thiamine(out) + H(+)(in) = thiamine(in) + H(+)(out)</text>
        <dbReference type="Rhea" id="RHEA:71271"/>
        <dbReference type="ChEBI" id="CHEBI:15378"/>
        <dbReference type="ChEBI" id="CHEBI:18385"/>
    </reaction>
</comment>
<comment type="catalytic activity">
    <reaction evidence="1">
        <text>estrone 3-sulfate(in) + H(+)(out) = estrone 3-sulfate(out) + H(+)(in)</text>
        <dbReference type="Rhea" id="RHEA:72139"/>
        <dbReference type="ChEBI" id="CHEBI:15378"/>
        <dbReference type="ChEBI" id="CHEBI:60050"/>
    </reaction>
</comment>
<comment type="catalytic activity">
    <reaction evidence="1">
        <text>creatinine(in) + H(+)(out) = creatinine(out) + H(+)(in)</text>
        <dbReference type="Rhea" id="RHEA:72183"/>
        <dbReference type="ChEBI" id="CHEBI:15378"/>
        <dbReference type="ChEBI" id="CHEBI:16737"/>
    </reaction>
</comment>
<comment type="biophysicochemical properties">
    <phDependence>
        <text evidence="3">Optimum pH is 6.0.</text>
    </phDependence>
</comment>
<comment type="subcellular location">
    <subcellularLocation>
        <location evidence="1">Cell membrane</location>
        <topology evidence="2">Multi-pass membrane protein</topology>
    </subcellularLocation>
    <subcellularLocation>
        <location evidence="1">Apical cell membrane</location>
        <topology evidence="2">Multi-pass membrane protein</topology>
    </subcellularLocation>
    <text evidence="1">Detected in the renal urinary tubules.</text>
</comment>
<comment type="tissue specificity">
    <text evidence="3">Expressed in renal cortical tissues.</text>
</comment>
<comment type="similarity">
    <text evidence="5">Belongs to the multi antimicrobial extrusion (MATE) (TC 2.A.66.1) family.</text>
</comment>
<comment type="caution">
    <text evidence="5">It is uncertain whether Met-1 or Met-30 is the initiator.</text>
</comment>
<organism>
    <name type="scientific">Oryctolagus cuniculus</name>
    <name type="common">Rabbit</name>
    <dbReference type="NCBI Taxonomy" id="9986"/>
    <lineage>
        <taxon>Eukaryota</taxon>
        <taxon>Metazoa</taxon>
        <taxon>Chordata</taxon>
        <taxon>Craniata</taxon>
        <taxon>Vertebrata</taxon>
        <taxon>Euteleostomi</taxon>
        <taxon>Mammalia</taxon>
        <taxon>Eutheria</taxon>
        <taxon>Euarchontoglires</taxon>
        <taxon>Glires</taxon>
        <taxon>Lagomorpha</taxon>
        <taxon>Leporidae</taxon>
        <taxon>Oryctolagus</taxon>
    </lineage>
</organism>
<proteinExistence type="evidence at protein level"/>
<sequence>MNTAFAGFDENRAGRRAPGCTGRPAFGLGMDSQQDVVNLDQGGCCPALRKLLPRGFWDEARALFVLSGPLFLFQVLNFLTYVVGTVFCGHLGKVELASVTLGVAFVNVCGVSVGAGLSSACDTLMSQSFGSPNKKHVGVILQRGSLILLLCCLPCWALFLNTQHILLLFRQDPAVSRLTQDYAMIFIPGLPAIFLYSLLAKYLQNQGIVWPQVLSGVVGNCVNGVANYALVSVLNLGVRGSAYANTISQFVQAAFLFLHIVLKKLHLETWEGWSSQCLRDWGPFLSLAIPSMLMMCVEWWAYEIGSFLMGLLGVVDLSGQAIIYEVATVVYMIPMGLGMAVCVRVGTALGAADTLQAKRSAVSGLLCTAGTSLVVGTLLGLLNSQLGYIFTSDEEVIALVNQVLPIYIVFQLVEAVCCVFGGVLRGTGKQAFGAIVNAIMYYIVGLPLGIVLTFVVGMRIMGLWLGMLTCIFLAAVTFVVYAVQLDWKLAAEEAQKHAGLQQQQQQQQQQGAECTAPSPGPDKAVVSSVATGCNPGIALTMYSRPGCHVDFYGRPEAAPAPAAPASRLSVRQLLFRRGAALAASVAVLMAGLLVRVLTTGY</sequence>
<name>S47A2_RABIT</name>
<evidence type="ECO:0000250" key="1">
    <source>
        <dbReference type="UniProtKB" id="Q86VL8"/>
    </source>
</evidence>
<evidence type="ECO:0000255" key="2"/>
<evidence type="ECO:0000269" key="3">
    <source>
    </source>
</evidence>
<evidence type="ECO:0000303" key="4">
    <source>
    </source>
</evidence>
<evidence type="ECO:0000305" key="5"/>
<protein>
    <recommendedName>
        <fullName>Multidrug and toxin extrusion protein 2</fullName>
        <shortName>MATE-2</shortName>
    </recommendedName>
    <alternativeName>
        <fullName evidence="4">MATE2-K</fullName>
    </alternativeName>
    <alternativeName>
        <fullName>Solute carrier family 47 member 2</fullName>
    </alternativeName>
</protein>
<reference key="1">
    <citation type="journal article" date="2007" name="Am. J. Physiol.">
        <title>Molecular identification and functional characterization of rabbit MATE1 and MATE2-K.</title>
        <authorList>
            <person name="Zhang X."/>
            <person name="Cherrington N.J."/>
            <person name="Wright S.H."/>
        </authorList>
    </citation>
    <scope>NUCLEOTIDE SEQUENCE [MRNA]</scope>
    <scope>TISSUE SPECIFICITY</scope>
    <scope>BIOPHYSICOCHEMICAL PROPERTIES</scope>
    <scope>FUNCTION</scope>
    <scope>TRANSPORTER ACTIVITY</scope>
</reference>
<accession>A7KAU3</accession>
<feature type="chain" id="PRO_0000311954" description="Multidrug and toxin extrusion protein 2">
    <location>
        <begin position="1"/>
        <end position="601"/>
    </location>
</feature>
<feature type="topological domain" description="Cytoplasmic" evidence="2">
    <location>
        <begin position="1"/>
        <end position="62"/>
    </location>
</feature>
<feature type="transmembrane region" description="Helical" evidence="2">
    <location>
        <begin position="63"/>
        <end position="83"/>
    </location>
</feature>
<feature type="topological domain" description="Extracellular" evidence="2">
    <location>
        <begin position="84"/>
        <end position="95"/>
    </location>
</feature>
<feature type="transmembrane region" description="Helical" evidence="2">
    <location>
        <begin position="96"/>
        <end position="116"/>
    </location>
</feature>
<feature type="topological domain" description="Cytoplasmic" evidence="2">
    <location>
        <begin position="117"/>
        <end position="145"/>
    </location>
</feature>
<feature type="transmembrane region" description="Helical" evidence="2">
    <location>
        <begin position="146"/>
        <end position="166"/>
    </location>
</feature>
<feature type="topological domain" description="Extracellular" evidence="2">
    <location>
        <begin position="167"/>
        <end position="182"/>
    </location>
</feature>
<feature type="transmembrane region" description="Helical" evidence="2">
    <location>
        <begin position="183"/>
        <end position="203"/>
    </location>
</feature>
<feature type="topological domain" description="Cytoplasmic" evidence="2">
    <location>
        <begin position="204"/>
        <end position="212"/>
    </location>
</feature>
<feature type="transmembrane region" description="Helical" evidence="2">
    <location>
        <begin position="213"/>
        <end position="233"/>
    </location>
</feature>
<feature type="topological domain" description="Extracellular" evidence="2">
    <location>
        <begin position="234"/>
        <end position="241"/>
    </location>
</feature>
<feature type="transmembrane region" description="Helical" evidence="2">
    <location>
        <begin position="242"/>
        <end position="262"/>
    </location>
</feature>
<feature type="topological domain" description="Cytoplasmic" evidence="2">
    <location>
        <begin position="263"/>
        <end position="281"/>
    </location>
</feature>
<feature type="transmembrane region" description="Helical" evidence="2">
    <location>
        <begin position="282"/>
        <end position="301"/>
    </location>
</feature>
<feature type="topological domain" description="Extracellular" evidence="2">
    <location>
        <begin position="302"/>
        <end position="320"/>
    </location>
</feature>
<feature type="transmembrane region" description="Helical" evidence="2">
    <location>
        <begin position="321"/>
        <end position="341"/>
    </location>
</feature>
<feature type="topological domain" description="Cytoplasmic" evidence="2">
    <location>
        <begin position="342"/>
        <end position="361"/>
    </location>
</feature>
<feature type="transmembrane region" description="Helical" evidence="2">
    <location>
        <begin position="362"/>
        <end position="382"/>
    </location>
</feature>
<feature type="topological domain" description="Extracellular" evidence="2">
    <location>
        <begin position="383"/>
        <end position="402"/>
    </location>
</feature>
<feature type="transmembrane region" description="Helical" evidence="2">
    <location>
        <begin position="403"/>
        <end position="423"/>
    </location>
</feature>
<feature type="topological domain" description="Cytoplasmic" evidence="2">
    <location>
        <begin position="424"/>
        <end position="437"/>
    </location>
</feature>
<feature type="transmembrane region" description="Helical" evidence="2">
    <location>
        <begin position="438"/>
        <end position="458"/>
    </location>
</feature>
<feature type="topological domain" description="Extracellular" evidence="2">
    <location>
        <position position="459"/>
    </location>
</feature>
<feature type="transmembrane region" description="Helical" evidence="2">
    <location>
        <begin position="460"/>
        <end position="480"/>
    </location>
</feature>
<feature type="topological domain" description="Cytoplasmic" evidence="2">
    <location>
        <begin position="481"/>
        <end position="577"/>
    </location>
</feature>
<feature type="transmembrane region" description="Helical" evidence="2">
    <location>
        <begin position="578"/>
        <end position="598"/>
    </location>
</feature>
<feature type="topological domain" description="Extracellular" evidence="2">
    <location>
        <begin position="599"/>
        <end position="601"/>
    </location>
</feature>